<gene>
    <name evidence="1" type="primary">fusA</name>
    <name type="ordered locus">TGAM_1397</name>
</gene>
<proteinExistence type="inferred from homology"/>
<dbReference type="EMBL" id="CP001398">
    <property type="protein sequence ID" value="ACS33899.1"/>
    <property type="molecule type" value="Genomic_DNA"/>
</dbReference>
<dbReference type="RefSeq" id="WP_014121932.1">
    <property type="nucleotide sequence ID" value="NC_012804.1"/>
</dbReference>
<dbReference type="SMR" id="C5A6N7"/>
<dbReference type="STRING" id="593117.TGAM_1397"/>
<dbReference type="PaxDb" id="593117-TGAM_1397"/>
<dbReference type="GeneID" id="7988130"/>
<dbReference type="KEGG" id="tga:TGAM_1397"/>
<dbReference type="PATRIC" id="fig|593117.10.peg.1399"/>
<dbReference type="eggNOG" id="arCOG01559">
    <property type="taxonomic scope" value="Archaea"/>
</dbReference>
<dbReference type="HOGENOM" id="CLU_002794_11_1_2"/>
<dbReference type="OrthoDB" id="6290at2157"/>
<dbReference type="Proteomes" id="UP000001488">
    <property type="component" value="Chromosome"/>
</dbReference>
<dbReference type="GO" id="GO:0005829">
    <property type="term" value="C:cytosol"/>
    <property type="evidence" value="ECO:0007669"/>
    <property type="project" value="TreeGrafter"/>
</dbReference>
<dbReference type="GO" id="GO:1990904">
    <property type="term" value="C:ribonucleoprotein complex"/>
    <property type="evidence" value="ECO:0007669"/>
    <property type="project" value="TreeGrafter"/>
</dbReference>
<dbReference type="GO" id="GO:0005525">
    <property type="term" value="F:GTP binding"/>
    <property type="evidence" value="ECO:0007669"/>
    <property type="project" value="UniProtKB-UniRule"/>
</dbReference>
<dbReference type="GO" id="GO:0003924">
    <property type="term" value="F:GTPase activity"/>
    <property type="evidence" value="ECO:0007669"/>
    <property type="project" value="InterPro"/>
</dbReference>
<dbReference type="GO" id="GO:0003746">
    <property type="term" value="F:translation elongation factor activity"/>
    <property type="evidence" value="ECO:0007669"/>
    <property type="project" value="UniProtKB-UniRule"/>
</dbReference>
<dbReference type="CDD" id="cd01681">
    <property type="entry name" value="aeEF2_snRNP_like_IV"/>
    <property type="match status" value="1"/>
</dbReference>
<dbReference type="CDD" id="cd01885">
    <property type="entry name" value="EF2"/>
    <property type="match status" value="1"/>
</dbReference>
<dbReference type="CDD" id="cd16268">
    <property type="entry name" value="EF2_II"/>
    <property type="match status" value="1"/>
</dbReference>
<dbReference type="CDD" id="cd16261">
    <property type="entry name" value="EF2_snRNP_III"/>
    <property type="match status" value="1"/>
</dbReference>
<dbReference type="CDD" id="cd01514">
    <property type="entry name" value="Elongation_Factor_C"/>
    <property type="match status" value="1"/>
</dbReference>
<dbReference type="FunFam" id="3.30.230.10:FF:000009">
    <property type="entry name" value="116 kDa U5 small nuclear ribonucleoprotein component"/>
    <property type="match status" value="1"/>
</dbReference>
<dbReference type="FunFam" id="2.40.30.10:FF:000110">
    <property type="entry name" value="Elongation factor 2"/>
    <property type="match status" value="1"/>
</dbReference>
<dbReference type="FunFam" id="3.30.70.240:FF:000010">
    <property type="entry name" value="Elongation factor 2"/>
    <property type="match status" value="1"/>
</dbReference>
<dbReference type="FunFam" id="3.40.50.300:FF:000684">
    <property type="entry name" value="Elongation factor 2"/>
    <property type="match status" value="1"/>
</dbReference>
<dbReference type="FunFam" id="3.30.70.870:FF:000002">
    <property type="entry name" value="Translation elongation factor 2"/>
    <property type="match status" value="1"/>
</dbReference>
<dbReference type="Gene3D" id="3.30.230.10">
    <property type="match status" value="1"/>
</dbReference>
<dbReference type="Gene3D" id="3.30.70.240">
    <property type="match status" value="1"/>
</dbReference>
<dbReference type="Gene3D" id="3.30.70.870">
    <property type="entry name" value="Elongation Factor G (Translational Gtpase), domain 3"/>
    <property type="match status" value="1"/>
</dbReference>
<dbReference type="Gene3D" id="3.40.50.300">
    <property type="entry name" value="P-loop containing nucleotide triphosphate hydrolases"/>
    <property type="match status" value="1"/>
</dbReference>
<dbReference type="Gene3D" id="2.40.30.10">
    <property type="entry name" value="Translation factors"/>
    <property type="match status" value="1"/>
</dbReference>
<dbReference type="HAMAP" id="MF_00054_A">
    <property type="entry name" value="EF_G_EF_2_A"/>
    <property type="match status" value="1"/>
</dbReference>
<dbReference type="InterPro" id="IPR041095">
    <property type="entry name" value="EFG_II"/>
</dbReference>
<dbReference type="InterPro" id="IPR035647">
    <property type="entry name" value="EFG_III/V"/>
</dbReference>
<dbReference type="InterPro" id="IPR000640">
    <property type="entry name" value="EFG_V-like"/>
</dbReference>
<dbReference type="InterPro" id="IPR004161">
    <property type="entry name" value="EFTu-like_2"/>
</dbReference>
<dbReference type="InterPro" id="IPR031157">
    <property type="entry name" value="G_TR_CS"/>
</dbReference>
<dbReference type="InterPro" id="IPR027417">
    <property type="entry name" value="P-loop_NTPase"/>
</dbReference>
<dbReference type="InterPro" id="IPR020568">
    <property type="entry name" value="Ribosomal_Su5_D2-typ_SF"/>
</dbReference>
<dbReference type="InterPro" id="IPR014721">
    <property type="entry name" value="Ribsml_uS5_D2-typ_fold_subgr"/>
</dbReference>
<dbReference type="InterPro" id="IPR005225">
    <property type="entry name" value="Small_GTP-bd"/>
</dbReference>
<dbReference type="InterPro" id="IPR000795">
    <property type="entry name" value="T_Tr_GTP-bd_dom"/>
</dbReference>
<dbReference type="InterPro" id="IPR009000">
    <property type="entry name" value="Transl_B-barrel_sf"/>
</dbReference>
<dbReference type="InterPro" id="IPR004543">
    <property type="entry name" value="Transl_elong_EFG/EF2_arc"/>
</dbReference>
<dbReference type="InterPro" id="IPR005517">
    <property type="entry name" value="Transl_elong_EFG/EF2_IV"/>
</dbReference>
<dbReference type="NCBIfam" id="TIGR00490">
    <property type="entry name" value="aEF-2"/>
    <property type="match status" value="1"/>
</dbReference>
<dbReference type="NCBIfam" id="TIGR00231">
    <property type="entry name" value="small_GTP"/>
    <property type="match status" value="1"/>
</dbReference>
<dbReference type="PANTHER" id="PTHR42908:SF3">
    <property type="entry name" value="ELONGATION FACTOR-LIKE GTPASE 1"/>
    <property type="match status" value="1"/>
</dbReference>
<dbReference type="PANTHER" id="PTHR42908">
    <property type="entry name" value="TRANSLATION ELONGATION FACTOR-RELATED"/>
    <property type="match status" value="1"/>
</dbReference>
<dbReference type="Pfam" id="PF00679">
    <property type="entry name" value="EFG_C"/>
    <property type="match status" value="1"/>
</dbReference>
<dbReference type="Pfam" id="PF14492">
    <property type="entry name" value="EFG_III"/>
    <property type="match status" value="1"/>
</dbReference>
<dbReference type="Pfam" id="PF03764">
    <property type="entry name" value="EFG_IV"/>
    <property type="match status" value="1"/>
</dbReference>
<dbReference type="Pfam" id="PF00009">
    <property type="entry name" value="GTP_EFTU"/>
    <property type="match status" value="1"/>
</dbReference>
<dbReference type="Pfam" id="PF03144">
    <property type="entry name" value="GTP_EFTU_D2"/>
    <property type="match status" value="1"/>
</dbReference>
<dbReference type="PRINTS" id="PR00315">
    <property type="entry name" value="ELONGATNFCT"/>
</dbReference>
<dbReference type="SMART" id="SM00838">
    <property type="entry name" value="EFG_C"/>
    <property type="match status" value="1"/>
</dbReference>
<dbReference type="SMART" id="SM00889">
    <property type="entry name" value="EFG_IV"/>
    <property type="match status" value="1"/>
</dbReference>
<dbReference type="SUPFAM" id="SSF54980">
    <property type="entry name" value="EF-G C-terminal domain-like"/>
    <property type="match status" value="2"/>
</dbReference>
<dbReference type="SUPFAM" id="SSF52540">
    <property type="entry name" value="P-loop containing nucleoside triphosphate hydrolases"/>
    <property type="match status" value="1"/>
</dbReference>
<dbReference type="SUPFAM" id="SSF54211">
    <property type="entry name" value="Ribosomal protein S5 domain 2-like"/>
    <property type="match status" value="1"/>
</dbReference>
<dbReference type="SUPFAM" id="SSF50447">
    <property type="entry name" value="Translation proteins"/>
    <property type="match status" value="1"/>
</dbReference>
<dbReference type="PROSITE" id="PS00301">
    <property type="entry name" value="G_TR_1"/>
    <property type="match status" value="1"/>
</dbReference>
<dbReference type="PROSITE" id="PS51722">
    <property type="entry name" value="G_TR_2"/>
    <property type="match status" value="1"/>
</dbReference>
<evidence type="ECO:0000255" key="1">
    <source>
        <dbReference type="HAMAP-Rule" id="MF_00054"/>
    </source>
</evidence>
<sequence length="732" mass="82036">MGRREEMIAKIKELMTQPERIRNMGIAAHIDHGKTTLSDNLLAGAGMISEELAGKQLVLDFDEQEQARGITINAANVSMVHNYEGQDYLINLIDTPGHVDFGGDVTRAMRAIDGAIIVVDAVEGVMPQTETVLRQALREYVKPVLFINKVDRLIKELKLGPNEILQRFAKIITDVNRLIKRYAPEEFKSQWMVKVEDGSVAFGSAYYNWALSVPFMKKTGVSFKDIVELTNKGDLKGLRQKAPLHVVVLDMVVRHLPNPLEAQKYRIPHLWRGDINSDVGQAMLKCDPKGKMVMVVTKIILDKHAGEVATGRVWSGTVKTGQEVYLINSKRKARIQQVGIYMGPERINMEAVPAGNIVAVTGLRDAMAGETVSVEKIEPFEALHYTSEPVVTVAIEAKNVKDLPKLIEALRQLAKEDPTLHVKIDEETGQHLLSGMGELHLEVKLYRLKTEWKLDVDVSPPIVVYRESVTKKSPIVEGKSPNKHNRFYITVEPMPDEIYEAIREGIIPEGRPKNPKEVAKKLAELGMDYELAKGIVDVYNGNMFFDNTKGIQYLNEVMDLLVDGFHMAMDEGPLAKEPVMKVIVRLHDAKIHEDNVHRGPAQIYPAIRTAIHCAMMKAGPVLYEPYQKVIINIPYEYMGAVSRELNQRRGQLIDMRQEGEVMIIIGEAPVAEMFGFAGAIRGATSGKALWTTEHAGFKRVPNELAQQIIRQIRQRKGLDPNPPTEKDVCPQQ</sequence>
<protein>
    <recommendedName>
        <fullName evidence="1">Elongation factor 2</fullName>
        <shortName evidence="1">EF-2</shortName>
    </recommendedName>
</protein>
<reference key="1">
    <citation type="journal article" date="2007" name="Genome Biol.">
        <title>Genome analysis and genome-wide proteomics of Thermococcus gammatolerans, the most radioresistant organism known amongst the Archaea.</title>
        <authorList>
            <person name="Zivanovic Y."/>
            <person name="Armengaud J."/>
            <person name="Lagorce A."/>
            <person name="Leplat C."/>
            <person name="Guerin P."/>
            <person name="Dutertre M."/>
            <person name="Anthouard V."/>
            <person name="Forterre P."/>
            <person name="Wincker P."/>
            <person name="Confalonieri F."/>
        </authorList>
    </citation>
    <scope>NUCLEOTIDE SEQUENCE [LARGE SCALE GENOMIC DNA]</scope>
    <source>
        <strain>DSM 15229 / JCM 11827 / EJ3</strain>
    </source>
</reference>
<keyword id="KW-0963">Cytoplasm</keyword>
<keyword id="KW-0251">Elongation factor</keyword>
<keyword id="KW-0342">GTP-binding</keyword>
<keyword id="KW-0547">Nucleotide-binding</keyword>
<keyword id="KW-0648">Protein biosynthesis</keyword>
<keyword id="KW-1185">Reference proteome</keyword>
<organism>
    <name type="scientific">Thermococcus gammatolerans (strain DSM 15229 / JCM 11827 / EJ3)</name>
    <dbReference type="NCBI Taxonomy" id="593117"/>
    <lineage>
        <taxon>Archaea</taxon>
        <taxon>Methanobacteriati</taxon>
        <taxon>Methanobacteriota</taxon>
        <taxon>Thermococci</taxon>
        <taxon>Thermococcales</taxon>
        <taxon>Thermococcaceae</taxon>
        <taxon>Thermococcus</taxon>
    </lineage>
</organism>
<feature type="chain" id="PRO_1000202320" description="Elongation factor 2">
    <location>
        <begin position="1"/>
        <end position="732"/>
    </location>
</feature>
<feature type="domain" description="tr-type G">
    <location>
        <begin position="19"/>
        <end position="230"/>
    </location>
</feature>
<feature type="binding site" evidence="1">
    <location>
        <begin position="28"/>
        <end position="35"/>
    </location>
    <ligand>
        <name>GTP</name>
        <dbReference type="ChEBI" id="CHEBI:37565"/>
    </ligand>
</feature>
<feature type="binding site" evidence="1">
    <location>
        <begin position="94"/>
        <end position="98"/>
    </location>
    <ligand>
        <name>GTP</name>
        <dbReference type="ChEBI" id="CHEBI:37565"/>
    </ligand>
</feature>
<feature type="binding site" evidence="1">
    <location>
        <begin position="148"/>
        <end position="151"/>
    </location>
    <ligand>
        <name>GTP</name>
        <dbReference type="ChEBI" id="CHEBI:37565"/>
    </ligand>
</feature>
<feature type="modified residue" description="Diphthamide" evidence="1">
    <location>
        <position position="597"/>
    </location>
</feature>
<accession>C5A6N7</accession>
<name>EF2_THEGJ</name>
<comment type="function">
    <text evidence="1">Catalyzes the GTP-dependent ribosomal translocation step during translation elongation. During this step, the ribosome changes from the pre-translocational (PRE) to the post-translocational (POST) state as the newly formed A-site-bound peptidyl-tRNA and P-site-bound deacylated tRNA move to the P and E sites, respectively. Catalyzes the coordinated movement of the two tRNA molecules, the mRNA and conformational changes in the ribosome.</text>
</comment>
<comment type="subcellular location">
    <subcellularLocation>
        <location evidence="1">Cytoplasm</location>
    </subcellularLocation>
</comment>
<comment type="similarity">
    <text evidence="1">Belongs to the TRAFAC class translation factor GTPase superfamily. Classic translation factor GTPase family. EF-G/EF-2 subfamily.</text>
</comment>